<reference key="1">
    <citation type="submission" date="2003-03" db="EMBL/GenBank/DDBJ databases">
        <title>The complete genome sequence of Neisseria gonorrhoeae.</title>
        <authorList>
            <person name="Lewis L.A."/>
            <person name="Gillaspy A.F."/>
            <person name="McLaughlin R.E."/>
            <person name="Gipson M."/>
            <person name="Ducey T.F."/>
            <person name="Ownbey T."/>
            <person name="Hartman K."/>
            <person name="Nydick C."/>
            <person name="Carson M.B."/>
            <person name="Vaughn J."/>
            <person name="Thomson C."/>
            <person name="Song L."/>
            <person name="Lin S."/>
            <person name="Yuan X."/>
            <person name="Najar F."/>
            <person name="Zhan M."/>
            <person name="Ren Q."/>
            <person name="Zhu H."/>
            <person name="Qi S."/>
            <person name="Kenton S.M."/>
            <person name="Lai H."/>
            <person name="White J.D."/>
            <person name="Clifton S."/>
            <person name="Roe B.A."/>
            <person name="Dyer D.W."/>
        </authorList>
    </citation>
    <scope>NUCLEOTIDE SEQUENCE [LARGE SCALE GENOMIC DNA]</scope>
    <source>
        <strain>ATCC 700825 / FA 1090</strain>
    </source>
</reference>
<evidence type="ECO:0000255" key="1">
    <source>
        <dbReference type="HAMAP-Rule" id="MF_00042"/>
    </source>
</evidence>
<evidence type="ECO:0000255" key="2">
    <source>
        <dbReference type="PROSITE-ProRule" id="PRU00408"/>
    </source>
</evidence>
<dbReference type="EC" id="3.1.26.4" evidence="1"/>
<dbReference type="EMBL" id="AE004969">
    <property type="protein sequence ID" value="AAW89828.1"/>
    <property type="molecule type" value="Genomic_DNA"/>
</dbReference>
<dbReference type="RefSeq" id="WP_003689763.1">
    <property type="nucleotide sequence ID" value="NC_002946.2"/>
</dbReference>
<dbReference type="RefSeq" id="YP_208240.1">
    <property type="nucleotide sequence ID" value="NC_002946.2"/>
</dbReference>
<dbReference type="SMR" id="Q5F7K9"/>
<dbReference type="STRING" id="242231.NGO_1162"/>
<dbReference type="GeneID" id="66753876"/>
<dbReference type="KEGG" id="ngo:NGO_1162"/>
<dbReference type="PATRIC" id="fig|242231.10.peg.1361"/>
<dbReference type="HOGENOM" id="CLU_030894_6_0_4"/>
<dbReference type="Proteomes" id="UP000000535">
    <property type="component" value="Chromosome"/>
</dbReference>
<dbReference type="GO" id="GO:0005737">
    <property type="term" value="C:cytoplasm"/>
    <property type="evidence" value="ECO:0007669"/>
    <property type="project" value="UniProtKB-SubCell"/>
</dbReference>
<dbReference type="GO" id="GO:0000287">
    <property type="term" value="F:magnesium ion binding"/>
    <property type="evidence" value="ECO:0007669"/>
    <property type="project" value="UniProtKB-UniRule"/>
</dbReference>
<dbReference type="GO" id="GO:0003676">
    <property type="term" value="F:nucleic acid binding"/>
    <property type="evidence" value="ECO:0007669"/>
    <property type="project" value="InterPro"/>
</dbReference>
<dbReference type="GO" id="GO:0004523">
    <property type="term" value="F:RNA-DNA hybrid ribonuclease activity"/>
    <property type="evidence" value="ECO:0007669"/>
    <property type="project" value="UniProtKB-UniRule"/>
</dbReference>
<dbReference type="GO" id="GO:0043137">
    <property type="term" value="P:DNA replication, removal of RNA primer"/>
    <property type="evidence" value="ECO:0007669"/>
    <property type="project" value="TreeGrafter"/>
</dbReference>
<dbReference type="CDD" id="cd09278">
    <property type="entry name" value="RNase_HI_prokaryote_like"/>
    <property type="match status" value="1"/>
</dbReference>
<dbReference type="FunFam" id="3.30.420.10:FF:000008">
    <property type="entry name" value="Ribonuclease H"/>
    <property type="match status" value="1"/>
</dbReference>
<dbReference type="Gene3D" id="3.30.420.10">
    <property type="entry name" value="Ribonuclease H-like superfamily/Ribonuclease H"/>
    <property type="match status" value="1"/>
</dbReference>
<dbReference type="HAMAP" id="MF_00042">
    <property type="entry name" value="RNase_H"/>
    <property type="match status" value="1"/>
</dbReference>
<dbReference type="InterPro" id="IPR050092">
    <property type="entry name" value="RNase_H"/>
</dbReference>
<dbReference type="InterPro" id="IPR012337">
    <property type="entry name" value="RNaseH-like_sf"/>
</dbReference>
<dbReference type="InterPro" id="IPR002156">
    <property type="entry name" value="RNaseH_domain"/>
</dbReference>
<dbReference type="InterPro" id="IPR036397">
    <property type="entry name" value="RNaseH_sf"/>
</dbReference>
<dbReference type="InterPro" id="IPR022892">
    <property type="entry name" value="RNaseHI"/>
</dbReference>
<dbReference type="NCBIfam" id="NF001236">
    <property type="entry name" value="PRK00203.1"/>
    <property type="match status" value="1"/>
</dbReference>
<dbReference type="PANTHER" id="PTHR10642">
    <property type="entry name" value="RIBONUCLEASE H1"/>
    <property type="match status" value="1"/>
</dbReference>
<dbReference type="PANTHER" id="PTHR10642:SF26">
    <property type="entry name" value="RIBONUCLEASE H1"/>
    <property type="match status" value="1"/>
</dbReference>
<dbReference type="Pfam" id="PF00075">
    <property type="entry name" value="RNase_H"/>
    <property type="match status" value="1"/>
</dbReference>
<dbReference type="SUPFAM" id="SSF53098">
    <property type="entry name" value="Ribonuclease H-like"/>
    <property type="match status" value="1"/>
</dbReference>
<dbReference type="PROSITE" id="PS50879">
    <property type="entry name" value="RNASE_H_1"/>
    <property type="match status" value="1"/>
</dbReference>
<protein>
    <recommendedName>
        <fullName evidence="1">Ribonuclease H</fullName>
        <shortName evidence="1">RNase H</shortName>
        <ecNumber evidence="1">3.1.26.4</ecNumber>
    </recommendedName>
</protein>
<organism>
    <name type="scientific">Neisseria gonorrhoeae (strain ATCC 700825 / FA 1090)</name>
    <dbReference type="NCBI Taxonomy" id="242231"/>
    <lineage>
        <taxon>Bacteria</taxon>
        <taxon>Pseudomonadati</taxon>
        <taxon>Pseudomonadota</taxon>
        <taxon>Betaproteobacteria</taxon>
        <taxon>Neisseriales</taxon>
        <taxon>Neisseriaceae</taxon>
        <taxon>Neisseria</taxon>
    </lineage>
</organism>
<gene>
    <name evidence="1" type="primary">rnhA</name>
    <name type="ordered locus">NGO_1162</name>
</gene>
<proteinExistence type="inferred from homology"/>
<keyword id="KW-0963">Cytoplasm</keyword>
<keyword id="KW-0255">Endonuclease</keyword>
<keyword id="KW-0378">Hydrolase</keyword>
<keyword id="KW-0460">Magnesium</keyword>
<keyword id="KW-0479">Metal-binding</keyword>
<keyword id="KW-0540">Nuclease</keyword>
<keyword id="KW-1185">Reference proteome</keyword>
<sequence>MDTPVYLYTDGACKGNPGAGGWGVLMRYGSREKELFGGEAQTTNNRMELTAVIEGLKSLKRRCTVIICTDSQYVKNGMENWIHGWKRNGWKTAAKQPVKNDDLWQELDALVGQHQVSWTWVKGHAGHAENERADDLANRGAAQFS</sequence>
<accession>Q5F7K9</accession>
<feature type="chain" id="PRO_0000195383" description="Ribonuclease H">
    <location>
        <begin position="1"/>
        <end position="145"/>
    </location>
</feature>
<feature type="domain" description="RNase H type-1" evidence="2">
    <location>
        <begin position="1"/>
        <end position="142"/>
    </location>
</feature>
<feature type="binding site" evidence="1">
    <location>
        <position position="10"/>
    </location>
    <ligand>
        <name>Mg(2+)</name>
        <dbReference type="ChEBI" id="CHEBI:18420"/>
        <label>1</label>
    </ligand>
</feature>
<feature type="binding site" evidence="1">
    <location>
        <position position="10"/>
    </location>
    <ligand>
        <name>Mg(2+)</name>
        <dbReference type="ChEBI" id="CHEBI:18420"/>
        <label>2</label>
    </ligand>
</feature>
<feature type="binding site" evidence="1">
    <location>
        <position position="48"/>
    </location>
    <ligand>
        <name>Mg(2+)</name>
        <dbReference type="ChEBI" id="CHEBI:18420"/>
        <label>1</label>
    </ligand>
</feature>
<feature type="binding site" evidence="1">
    <location>
        <position position="70"/>
    </location>
    <ligand>
        <name>Mg(2+)</name>
        <dbReference type="ChEBI" id="CHEBI:18420"/>
        <label>1</label>
    </ligand>
</feature>
<feature type="binding site" evidence="1">
    <location>
        <position position="134"/>
    </location>
    <ligand>
        <name>Mg(2+)</name>
        <dbReference type="ChEBI" id="CHEBI:18420"/>
        <label>2</label>
    </ligand>
</feature>
<comment type="function">
    <text evidence="1">Endonuclease that specifically degrades the RNA of RNA-DNA hybrids.</text>
</comment>
<comment type="catalytic activity">
    <reaction evidence="1">
        <text>Endonucleolytic cleavage to 5'-phosphomonoester.</text>
        <dbReference type="EC" id="3.1.26.4"/>
    </reaction>
</comment>
<comment type="cofactor">
    <cofactor evidence="1">
        <name>Mg(2+)</name>
        <dbReference type="ChEBI" id="CHEBI:18420"/>
    </cofactor>
    <text evidence="1">Binds 1 Mg(2+) ion per subunit. May bind a second metal ion at a regulatory site, or after substrate binding.</text>
</comment>
<comment type="subunit">
    <text evidence="1">Monomer.</text>
</comment>
<comment type="subcellular location">
    <subcellularLocation>
        <location evidence="1">Cytoplasm</location>
    </subcellularLocation>
</comment>
<comment type="similarity">
    <text evidence="1">Belongs to the RNase H family.</text>
</comment>
<name>RNH_NEIG1</name>